<accession>Q1CSE0</accession>
<gene>
    <name evidence="1" type="primary">tolB</name>
    <name type="ordered locus">HPAG1_1065</name>
</gene>
<protein>
    <recommendedName>
        <fullName evidence="1">Tol-Pal system protein TolB</fullName>
    </recommendedName>
</protein>
<comment type="function">
    <text evidence="1">Part of the Tol-Pal system, which plays a role in outer membrane invagination during cell division and is important for maintaining outer membrane integrity.</text>
</comment>
<comment type="subunit">
    <text evidence="1">The Tol-Pal system is composed of five core proteins: the inner membrane proteins TolA, TolQ and TolR, the periplasmic protein TolB and the outer membrane protein Pal. They form a network linking the inner and outer membranes and the peptidoglycan layer.</text>
</comment>
<comment type="subcellular location">
    <subcellularLocation>
        <location evidence="1">Periplasm</location>
    </subcellularLocation>
</comment>
<comment type="similarity">
    <text evidence="1">Belongs to the TolB family.</text>
</comment>
<feature type="signal peptide" evidence="1">
    <location>
        <begin position="1"/>
        <end position="16"/>
    </location>
</feature>
<feature type="chain" id="PRO_0000259053" description="Tol-Pal system protein TolB" evidence="1">
    <location>
        <begin position="17"/>
        <end position="417"/>
    </location>
</feature>
<sequence length="417" mass="47708">MRYLWLFLIGTIGLFATDKTLDIIKTIQKLPKIEVRYSTDNDANYALKLHEVLANDLKTSQHFDVSQNKDQGAINYTELKDKKVHLVALVSVAVENGNKISRLKLYDVNTSTLVKTFDYPILSADLYPFAAHNMAIVVNDYLKAPSIAWMKRLIVFSKYIGPGITNIALADYTMRYQKEIIKNNRLNIFPKWANAEQTEFYYTQYGERTPMILKYNIQKATHENIASSQGMAVVSSVSSDGSKILMSLAPDGQPDVYLYDTHKKTKTKITRYPGIDVSGVFLEDDKSMAFVSDRSGYPNIYMKKLGLKESAEQLLYEGRSNESIDAYKDSIVYVSRENLNEFGKTVFNLNLITLNSKYIRRLTVNGSNQMPRFSTDGRNIMYIKKTPQEYAMGLILLDYNQSFLFPLKNVKIQAFDW</sequence>
<evidence type="ECO:0000255" key="1">
    <source>
        <dbReference type="HAMAP-Rule" id="MF_00671"/>
    </source>
</evidence>
<reference key="1">
    <citation type="journal article" date="2006" name="Proc. Natl. Acad. Sci. U.S.A.">
        <title>The complete genome sequence of a chronic atrophic gastritis Helicobacter pylori strain: evolution during disease progression.</title>
        <authorList>
            <person name="Oh J.D."/>
            <person name="Kling-Baeckhed H."/>
            <person name="Giannakis M."/>
            <person name="Xu J."/>
            <person name="Fulton R.S."/>
            <person name="Fulton L.A."/>
            <person name="Cordum H.S."/>
            <person name="Wang C."/>
            <person name="Elliott G."/>
            <person name="Edwards J."/>
            <person name="Mardis E.R."/>
            <person name="Engstrand L.G."/>
            <person name="Gordon J.I."/>
        </authorList>
    </citation>
    <scope>NUCLEOTIDE SEQUENCE [LARGE SCALE GENOMIC DNA]</scope>
    <source>
        <strain>HPAG1</strain>
    </source>
</reference>
<organism>
    <name type="scientific">Helicobacter pylori (strain HPAG1)</name>
    <dbReference type="NCBI Taxonomy" id="357544"/>
    <lineage>
        <taxon>Bacteria</taxon>
        <taxon>Pseudomonadati</taxon>
        <taxon>Campylobacterota</taxon>
        <taxon>Epsilonproteobacteria</taxon>
        <taxon>Campylobacterales</taxon>
        <taxon>Helicobacteraceae</taxon>
        <taxon>Helicobacter</taxon>
    </lineage>
</organism>
<proteinExistence type="inferred from homology"/>
<dbReference type="EMBL" id="CP000241">
    <property type="protein sequence ID" value="ABF85132.1"/>
    <property type="molecule type" value="Genomic_DNA"/>
</dbReference>
<dbReference type="RefSeq" id="WP_001269988.1">
    <property type="nucleotide sequence ID" value="NC_008086.1"/>
</dbReference>
<dbReference type="SMR" id="Q1CSE0"/>
<dbReference type="KEGG" id="hpa:HPAG1_1065"/>
<dbReference type="HOGENOM" id="CLU_665280_0_0_7"/>
<dbReference type="GO" id="GO:0042597">
    <property type="term" value="C:periplasmic space"/>
    <property type="evidence" value="ECO:0007669"/>
    <property type="project" value="UniProtKB-SubCell"/>
</dbReference>
<dbReference type="GO" id="GO:0051301">
    <property type="term" value="P:cell division"/>
    <property type="evidence" value="ECO:0007669"/>
    <property type="project" value="UniProtKB-KW"/>
</dbReference>
<dbReference type="GO" id="GO:0017038">
    <property type="term" value="P:protein import"/>
    <property type="evidence" value="ECO:0007669"/>
    <property type="project" value="InterPro"/>
</dbReference>
<dbReference type="Gene3D" id="2.120.10.30">
    <property type="entry name" value="TolB, C-terminal domain"/>
    <property type="match status" value="1"/>
</dbReference>
<dbReference type="Gene3D" id="3.40.50.10070">
    <property type="entry name" value="TolB, N-terminal domain"/>
    <property type="match status" value="1"/>
</dbReference>
<dbReference type="HAMAP" id="MF_00671">
    <property type="entry name" value="TolB"/>
    <property type="match status" value="1"/>
</dbReference>
<dbReference type="InterPro" id="IPR011042">
    <property type="entry name" value="6-blade_b-propeller_TolB-like"/>
</dbReference>
<dbReference type="InterPro" id="IPR011659">
    <property type="entry name" value="PD40"/>
</dbReference>
<dbReference type="InterPro" id="IPR014167">
    <property type="entry name" value="Tol-Pal_TolB"/>
</dbReference>
<dbReference type="NCBIfam" id="NF003124">
    <property type="entry name" value="PRK04043.1"/>
    <property type="match status" value="1"/>
</dbReference>
<dbReference type="PANTHER" id="PTHR36842:SF1">
    <property type="entry name" value="PROTEIN TOLB"/>
    <property type="match status" value="1"/>
</dbReference>
<dbReference type="PANTHER" id="PTHR36842">
    <property type="entry name" value="PROTEIN TOLB HOMOLOG"/>
    <property type="match status" value="1"/>
</dbReference>
<dbReference type="Pfam" id="PF07676">
    <property type="entry name" value="PD40"/>
    <property type="match status" value="1"/>
</dbReference>
<dbReference type="SUPFAM" id="SSF52964">
    <property type="entry name" value="TolB, N-terminal domain"/>
    <property type="match status" value="1"/>
</dbReference>
<dbReference type="SUPFAM" id="SSF69304">
    <property type="entry name" value="Tricorn protease N-terminal domain"/>
    <property type="match status" value="1"/>
</dbReference>
<name>TOLB_HELPH</name>
<keyword id="KW-0131">Cell cycle</keyword>
<keyword id="KW-0132">Cell division</keyword>
<keyword id="KW-0574">Periplasm</keyword>
<keyword id="KW-0732">Signal</keyword>